<proteinExistence type="inferred from homology"/>
<keyword id="KW-0963">Cytoplasm</keyword>
<keyword id="KW-0441">Lipid A biosynthesis</keyword>
<keyword id="KW-0444">Lipid biosynthesis</keyword>
<keyword id="KW-0443">Lipid metabolism</keyword>
<keyword id="KW-0456">Lyase</keyword>
<feature type="chain" id="PRO_0000091767" description="3-hydroxyacyl-[acyl-carrier-protein] dehydratase FabZ">
    <location>
        <begin position="1"/>
        <end position="178"/>
    </location>
</feature>
<feature type="active site" evidence="1">
    <location>
        <position position="54"/>
    </location>
</feature>
<organism>
    <name type="scientific">Yersinia enterocolitica</name>
    <dbReference type="NCBI Taxonomy" id="630"/>
    <lineage>
        <taxon>Bacteria</taxon>
        <taxon>Pseudomonadati</taxon>
        <taxon>Pseudomonadota</taxon>
        <taxon>Gammaproteobacteria</taxon>
        <taxon>Enterobacterales</taxon>
        <taxon>Yersiniaceae</taxon>
        <taxon>Yersinia</taxon>
    </lineage>
</organism>
<dbReference type="EC" id="4.2.1.59" evidence="1"/>
<dbReference type="EMBL" id="Z25463">
    <property type="protein sequence ID" value="CAA80952.1"/>
    <property type="status" value="ALT_INIT"/>
    <property type="molecule type" value="Genomic_DNA"/>
</dbReference>
<dbReference type="PIR" id="S35968">
    <property type="entry name" value="S35968"/>
</dbReference>
<dbReference type="RefSeq" id="WP_005164036.1">
    <property type="nucleotide sequence ID" value="NZ_WJHZ01000005.1"/>
</dbReference>
<dbReference type="SMR" id="P32205"/>
<dbReference type="STRING" id="1443113.LC20_01206"/>
<dbReference type="GeneID" id="31412022"/>
<dbReference type="PATRIC" id="fig|630.129.peg.3351"/>
<dbReference type="eggNOG" id="COG0764">
    <property type="taxonomic scope" value="Bacteria"/>
</dbReference>
<dbReference type="GO" id="GO:0005737">
    <property type="term" value="C:cytoplasm"/>
    <property type="evidence" value="ECO:0007669"/>
    <property type="project" value="UniProtKB-SubCell"/>
</dbReference>
<dbReference type="GO" id="GO:0016020">
    <property type="term" value="C:membrane"/>
    <property type="evidence" value="ECO:0007669"/>
    <property type="project" value="GOC"/>
</dbReference>
<dbReference type="GO" id="GO:0019171">
    <property type="term" value="F:(3R)-hydroxyacyl-[acyl-carrier-protein] dehydratase activity"/>
    <property type="evidence" value="ECO:0007669"/>
    <property type="project" value="UniProtKB-EC"/>
</dbReference>
<dbReference type="GO" id="GO:0006633">
    <property type="term" value="P:fatty acid biosynthetic process"/>
    <property type="evidence" value="ECO:0007669"/>
    <property type="project" value="UniProtKB-UniRule"/>
</dbReference>
<dbReference type="GO" id="GO:0009245">
    <property type="term" value="P:lipid A biosynthetic process"/>
    <property type="evidence" value="ECO:0007669"/>
    <property type="project" value="UniProtKB-UniRule"/>
</dbReference>
<dbReference type="CDD" id="cd01288">
    <property type="entry name" value="FabZ"/>
    <property type="match status" value="1"/>
</dbReference>
<dbReference type="FunFam" id="3.10.129.10:FF:000001">
    <property type="entry name" value="3-hydroxyacyl-[acyl-carrier-protein] dehydratase FabZ"/>
    <property type="match status" value="1"/>
</dbReference>
<dbReference type="Gene3D" id="3.10.129.10">
    <property type="entry name" value="Hotdog Thioesterase"/>
    <property type="match status" value="1"/>
</dbReference>
<dbReference type="HAMAP" id="MF_00406">
    <property type="entry name" value="FabZ"/>
    <property type="match status" value="1"/>
</dbReference>
<dbReference type="InterPro" id="IPR013114">
    <property type="entry name" value="FabA_FabZ"/>
</dbReference>
<dbReference type="InterPro" id="IPR010084">
    <property type="entry name" value="FabZ"/>
</dbReference>
<dbReference type="InterPro" id="IPR029069">
    <property type="entry name" value="HotDog_dom_sf"/>
</dbReference>
<dbReference type="NCBIfam" id="TIGR01750">
    <property type="entry name" value="fabZ"/>
    <property type="match status" value="1"/>
</dbReference>
<dbReference type="NCBIfam" id="NF000582">
    <property type="entry name" value="PRK00006.1"/>
    <property type="match status" value="1"/>
</dbReference>
<dbReference type="PANTHER" id="PTHR30272">
    <property type="entry name" value="3-HYDROXYACYL-[ACYL-CARRIER-PROTEIN] DEHYDRATASE"/>
    <property type="match status" value="1"/>
</dbReference>
<dbReference type="PANTHER" id="PTHR30272:SF1">
    <property type="entry name" value="3-HYDROXYACYL-[ACYL-CARRIER-PROTEIN] DEHYDRATASE"/>
    <property type="match status" value="1"/>
</dbReference>
<dbReference type="Pfam" id="PF07977">
    <property type="entry name" value="FabA"/>
    <property type="match status" value="1"/>
</dbReference>
<dbReference type="SUPFAM" id="SSF54637">
    <property type="entry name" value="Thioesterase/thiol ester dehydrase-isomerase"/>
    <property type="match status" value="1"/>
</dbReference>
<gene>
    <name evidence="1" type="primary">fabZ</name>
</gene>
<name>FABZ_YEREN</name>
<reference key="1">
    <citation type="journal article" date="1994" name="FEBS Lett.">
        <title>The novel hexapeptide motif found in the acyltransferases LpxA and LpxD of lipid A biosynthesis is conserved in various bacteria.</title>
        <authorList>
            <person name="Vuorio R."/>
            <person name="Haerkonen T."/>
            <person name="Tolvanen M."/>
            <person name="Vaara M."/>
        </authorList>
    </citation>
    <scope>NUCLEOTIDE SEQUENCE [GENOMIC DNA]</scope>
    <source>
        <strain>EH902</strain>
    </source>
</reference>
<comment type="function">
    <text evidence="1">Involved in unsaturated fatty acids biosynthesis. Catalyzes the dehydration of short chain beta-hydroxyacyl-ACPs and long chain saturated and unsaturated beta-hydroxyacyl-ACPs.</text>
</comment>
<comment type="catalytic activity">
    <reaction evidence="1">
        <text>a (3R)-hydroxyacyl-[ACP] = a (2E)-enoyl-[ACP] + H2O</text>
        <dbReference type="Rhea" id="RHEA:13097"/>
        <dbReference type="Rhea" id="RHEA-COMP:9925"/>
        <dbReference type="Rhea" id="RHEA-COMP:9945"/>
        <dbReference type="ChEBI" id="CHEBI:15377"/>
        <dbReference type="ChEBI" id="CHEBI:78784"/>
        <dbReference type="ChEBI" id="CHEBI:78827"/>
        <dbReference type="EC" id="4.2.1.59"/>
    </reaction>
</comment>
<comment type="subcellular location">
    <subcellularLocation>
        <location evidence="1">Cytoplasm</location>
    </subcellularLocation>
</comment>
<comment type="similarity">
    <text evidence="1">Belongs to the thioester dehydratase family. FabZ subfamily.</text>
</comment>
<comment type="sequence caution" evidence="2">
    <conflict type="erroneous initiation">
        <sequence resource="EMBL-CDS" id="CAA80952"/>
    </conflict>
</comment>
<sequence>MTTDTHTLHIEEILDLLPHRFPFLLVDRVLDFEEGKFLRAVKNVSFNEPFFQGHFPGKPIFPGVLILEAMAQATGILAFKSRGKLEPGELYYFAGIDEARFKRPVVPGDQMIMEVEFVKERRGLTRFTGVAKVDGEIVCTATMMCARSKPATAVVIKSEVTKSEGTKSEVGKPDVKES</sequence>
<protein>
    <recommendedName>
        <fullName evidence="1">3-hydroxyacyl-[acyl-carrier-protein] dehydratase FabZ</fullName>
        <ecNumber evidence="1">4.2.1.59</ecNumber>
    </recommendedName>
    <alternativeName>
        <fullName evidence="1">(3R)-hydroxymyristoyl-[acyl-carrier-protein] dehydratase</fullName>
        <shortName evidence="1">(3R)-hydroxymyristoyl-ACP dehydrase</shortName>
    </alternativeName>
    <alternativeName>
        <fullName evidence="1">Beta-hydroxyacyl-ACP dehydratase</fullName>
    </alternativeName>
</protein>
<accession>P32205</accession>
<evidence type="ECO:0000255" key="1">
    <source>
        <dbReference type="HAMAP-Rule" id="MF_00406"/>
    </source>
</evidence>
<evidence type="ECO:0000305" key="2"/>